<gene>
    <name evidence="6 7" type="primary">PROSCOOP2</name>
    <name evidence="6 7" type="synonym">SCOOP2</name>
    <name evidence="10" type="ordered locus">At5g44567</name>
    <name evidence="11" type="ORF">K15C23</name>
</gene>
<protein>
    <recommendedName>
        <fullName evidence="6 7">Serine rich endogenous peptide 2</fullName>
        <shortName evidence="6 7">AtSCOOP2</shortName>
    </recommendedName>
    <alternativeName>
        <fullName evidence="6 7">Phytocytokine SCOOP2</fullName>
    </alternativeName>
    <alternativeName>
        <fullName evidence="6 7">Precursor of serine rich endogenous peptide phytocytokine 2</fullName>
    </alternativeName>
</protein>
<evidence type="ECO:0000250" key="1">
    <source>
        <dbReference type="UniProtKB" id="B3H7I1"/>
    </source>
</evidence>
<evidence type="ECO:0000255" key="2"/>
<evidence type="ECO:0000256" key="3">
    <source>
        <dbReference type="SAM" id="MobiDB-lite"/>
    </source>
</evidence>
<evidence type="ECO:0000269" key="4">
    <source>
    </source>
</evidence>
<evidence type="ECO:0000269" key="5">
    <source>
    </source>
</evidence>
<evidence type="ECO:0000303" key="6">
    <source>
    </source>
</evidence>
<evidence type="ECO:0000303" key="7">
    <source>
    </source>
</evidence>
<evidence type="ECO:0000305" key="8"/>
<evidence type="ECO:0000305" key="9">
    <source>
    </source>
</evidence>
<evidence type="ECO:0000312" key="10">
    <source>
        <dbReference type="Araport" id="AT5G44567"/>
    </source>
</evidence>
<evidence type="ECO:0000312" key="11">
    <source>
        <dbReference type="EMBL" id="AB024024"/>
    </source>
</evidence>
<accession>A0A1P8BDL3</accession>
<name>SCOP2_ARATH</name>
<sequence length="79" mass="8395">MANNLGLVILLLVIVLVSCSKSSDCALASPQKSRPSSEWRRKLIPVRSSRSPRSPSFAPKKPPPPPPSPPLSPSSPPSN</sequence>
<organism>
    <name type="scientific">Arabidopsis thaliana</name>
    <name type="common">Mouse-ear cress</name>
    <dbReference type="NCBI Taxonomy" id="3702"/>
    <lineage>
        <taxon>Eukaryota</taxon>
        <taxon>Viridiplantae</taxon>
        <taxon>Streptophyta</taxon>
        <taxon>Embryophyta</taxon>
        <taxon>Tracheophyta</taxon>
        <taxon>Spermatophyta</taxon>
        <taxon>Magnoliopsida</taxon>
        <taxon>eudicotyledons</taxon>
        <taxon>Gunneridae</taxon>
        <taxon>Pentapetalae</taxon>
        <taxon>rosids</taxon>
        <taxon>malvids</taxon>
        <taxon>Brassicales</taxon>
        <taxon>Brassicaceae</taxon>
        <taxon>Camelineae</taxon>
        <taxon>Arabidopsis</taxon>
    </lineage>
</organism>
<feature type="signal peptide" evidence="2">
    <location>
        <begin position="1"/>
        <end position="19"/>
    </location>
</feature>
<feature type="propeptide" id="PRO_0000457216" description="Removed in mature form" evidence="1">
    <location>
        <begin position="20"/>
        <end status="unknown"/>
    </location>
</feature>
<feature type="peptide" id="PRO_0000457217" description="Serine rich endogenous peptide 2" evidence="1">
    <location>
        <begin status="unknown"/>
        <end position="79"/>
    </location>
</feature>
<feature type="region of interest" description="Disordered" evidence="3">
    <location>
        <begin position="25"/>
        <end position="79"/>
    </location>
</feature>
<feature type="short sequence motif" description="SCOOP motif" evidence="9">
    <location>
        <begin position="45"/>
        <end position="57"/>
    </location>
</feature>
<feature type="short sequence motif" description="SxS motif essential for MIK2 binding" evidence="1">
    <location>
        <begin position="49"/>
        <end position="51"/>
    </location>
</feature>
<feature type="compositionally biased region" description="Low complexity" evidence="3">
    <location>
        <begin position="45"/>
        <end position="59"/>
    </location>
</feature>
<feature type="compositionally biased region" description="Pro residues" evidence="3">
    <location>
        <begin position="60"/>
        <end position="79"/>
    </location>
</feature>
<reference key="1">
    <citation type="submission" date="1999-02" db="EMBL/GenBank/DDBJ databases">
        <title>Structural analysis of Arabidopsis thaliana chromosome 5. XI.</title>
        <authorList>
            <person name="Kaneko T."/>
            <person name="Katoh T."/>
            <person name="Asamizu E."/>
            <person name="Sato S."/>
            <person name="Nakamura Y."/>
            <person name="Kotani H."/>
            <person name="Tabata S."/>
        </authorList>
    </citation>
    <scope>NUCLEOTIDE SEQUENCE [LARGE SCALE GENOMIC DNA]</scope>
    <source>
        <strain>cv. Columbia</strain>
    </source>
</reference>
<reference key="2">
    <citation type="journal article" date="2017" name="Plant J.">
        <title>Araport11: a complete reannotation of the Arabidopsis thaliana reference genome.</title>
        <authorList>
            <person name="Cheng C.Y."/>
            <person name="Krishnakumar V."/>
            <person name="Chan A.P."/>
            <person name="Thibaud-Nissen F."/>
            <person name="Schobel S."/>
            <person name="Town C.D."/>
        </authorList>
    </citation>
    <scope>GENOME REANNOTATION</scope>
    <source>
        <strain>cv. Columbia</strain>
    </source>
</reference>
<reference key="3">
    <citation type="journal article" date="2005" name="Plant Physiol.">
        <title>Analysis of the cDNAs of hypothetical genes on Arabidopsis chromosome 2 reveals numerous transcript variants.</title>
        <authorList>
            <person name="Xiao Y.-L."/>
            <person name="Smith S.R."/>
            <person name="Ishmael N."/>
            <person name="Redman J.C."/>
            <person name="Kumar N."/>
            <person name="Monaghan E.L."/>
            <person name="Ayele M."/>
            <person name="Haas B.J."/>
            <person name="Wu H.C."/>
            <person name="Town C.D."/>
        </authorList>
    </citation>
    <scope>NUCLEOTIDE SEQUENCE [LARGE SCALE MRNA]</scope>
    <source>
        <strain>cv. Columbia</strain>
    </source>
</reference>
<reference key="4">
    <citation type="journal article" date="2019" name="J. Exp. Bot.">
        <title>The SCOOP12 peptide regulates defense response and root elongation in Arabidopsis thaliana.</title>
        <authorList>
            <person name="Gully K."/>
            <person name="Pelletier S."/>
            <person name="Guillou M.-C."/>
            <person name="Ferrand M."/>
            <person name="Aligon S."/>
            <person name="Pokotylo I."/>
            <person name="Perrin A."/>
            <person name="Vergne E."/>
            <person name="Fagard M."/>
            <person name="Ruelland E."/>
            <person name="Grappin P."/>
            <person name="Bucher E."/>
            <person name="Renou J.-P."/>
            <person name="Aubourg S."/>
        </authorList>
    </citation>
    <scope>GENE FAMILY</scope>
    <source>
        <strain>cv. Columbia</strain>
        <strain>cv. Wassilewskija</strain>
    </source>
</reference>
<reference key="5">
    <citation type="journal article" date="2021" name="Nat. Commun.">
        <title>Perception of a divergent family of phytocytokines by the Arabidopsis receptor kinase MIK2.</title>
        <authorList>
            <person name="Rhodes J."/>
            <person name="Yang H."/>
            <person name="Moussu S."/>
            <person name="Boutrot F."/>
            <person name="Santiago J."/>
            <person name="Zipfel C."/>
        </authorList>
    </citation>
    <scope>FUNCTION</scope>
    <scope>GENE FAMILY</scope>
    <source>
        <strain>cv. Columbia</strain>
        <strain>cv. Wassilewskija-2</strain>
    </source>
</reference>
<reference key="6">
    <citation type="journal article" date="2021" name="Nat. Commun.">
        <title>The Arabidopsis MIK2 receptor elicits immunity by sensing a conserved signature from phytocytokines and microbes.</title>
        <authorList>
            <person name="Hou S."/>
            <person name="Liu D."/>
            <person name="Huang S."/>
            <person name="Luo D."/>
            <person name="Liu Z."/>
            <person name="Xiang Q."/>
            <person name="Wang P."/>
            <person name="Mu R."/>
            <person name="Han Z."/>
            <person name="Chen S."/>
            <person name="Chai J."/>
            <person name="Shan L."/>
            <person name="He P."/>
        </authorList>
    </citation>
    <scope>GENE FAMILY</scope>
    <scope>NOMENCLATURE</scope>
    <source>
        <strain>cv. Columbia</strain>
    </source>
</reference>
<reference key="7">
    <citation type="journal article" date="2022" name="Front. Plant Sci.">
        <title>The MIK2/SCOOP signaling system contributes to Arabidopsis resistance against herbivory by modulating jasmonate and indole glucosinolate biosynthesis.</title>
        <authorList>
            <person name="Stahl E."/>
            <person name="Fernandez Martin A."/>
            <person name="Glauser G."/>
            <person name="Guillou M.-C."/>
            <person name="Aubourg S."/>
            <person name="Renou J.-P."/>
            <person name="Reymond P."/>
        </authorList>
    </citation>
    <scope>INDUCTION BY INSECT HERBIVORY</scope>
    <source>
        <strain>cv. Columbia</strain>
        <strain>cv. Wassilewskija</strain>
    </source>
</reference>
<dbReference type="EMBL" id="AB024024">
    <property type="status" value="NOT_ANNOTATED_CDS"/>
    <property type="molecule type" value="Genomic_DNA"/>
</dbReference>
<dbReference type="EMBL" id="CP002688">
    <property type="protein sequence ID" value="ANM69660.1"/>
    <property type="molecule type" value="Genomic_DNA"/>
</dbReference>
<dbReference type="EMBL" id="EG446167">
    <property type="status" value="NOT_ANNOTATED_CDS"/>
    <property type="molecule type" value="mRNA"/>
</dbReference>
<dbReference type="EMBL" id="EG446890">
    <property type="status" value="NOT_ANNOTATED_CDS"/>
    <property type="molecule type" value="mRNA"/>
</dbReference>
<dbReference type="EMBL" id="EG448031">
    <property type="status" value="NOT_ANNOTATED_CDS"/>
    <property type="molecule type" value="mRNA"/>
</dbReference>
<dbReference type="RefSeq" id="NP_001331322.1">
    <property type="nucleotide sequence ID" value="NM_001344564.1"/>
</dbReference>
<dbReference type="EnsemblPlants" id="AT5G44567.1">
    <property type="protein sequence ID" value="AT5G44567.1"/>
    <property type="gene ID" value="AT5G44567"/>
</dbReference>
<dbReference type="GeneID" id="28721249"/>
<dbReference type="Gramene" id="AT5G44567.1">
    <property type="protein sequence ID" value="AT5G44567.1"/>
    <property type="gene ID" value="AT5G44567"/>
</dbReference>
<dbReference type="KEGG" id="ath:AT5G44567"/>
<dbReference type="Araport" id="AT5G44567"/>
<dbReference type="TAIR" id="AT5G44567"/>
<dbReference type="InParanoid" id="A0A1P8BDL3"/>
<dbReference type="OMA" id="KSNDCAL"/>
<dbReference type="PRO" id="PR:A0A1P8BDL3"/>
<dbReference type="Proteomes" id="UP000006548">
    <property type="component" value="Chromosome 5"/>
</dbReference>
<dbReference type="GO" id="GO:0048046">
    <property type="term" value="C:apoplast"/>
    <property type="evidence" value="ECO:0000250"/>
    <property type="project" value="UniProtKB"/>
</dbReference>
<dbReference type="GO" id="GO:0005886">
    <property type="term" value="C:plasma membrane"/>
    <property type="evidence" value="ECO:0007669"/>
    <property type="project" value="UniProtKB-SubCell"/>
</dbReference>
<dbReference type="GO" id="GO:0030275">
    <property type="term" value="F:LRR domain binding"/>
    <property type="evidence" value="ECO:0000250"/>
    <property type="project" value="UniProtKB"/>
</dbReference>
<dbReference type="GO" id="GO:0033612">
    <property type="term" value="F:receptor serine/threonine kinase binding"/>
    <property type="evidence" value="ECO:0000250"/>
    <property type="project" value="UniProtKB"/>
</dbReference>
<dbReference type="GO" id="GO:0009625">
    <property type="term" value="P:response to insect"/>
    <property type="evidence" value="ECO:0000270"/>
    <property type="project" value="UniProtKB"/>
</dbReference>
<dbReference type="GO" id="GO:0009611">
    <property type="term" value="P:response to wounding"/>
    <property type="evidence" value="ECO:0000270"/>
    <property type="project" value="UniProtKB"/>
</dbReference>
<comment type="function">
    <text evidence="4">Brassicaceae-specific phytocytokine (plant endogenous peptide released into the apoplast) perceived by MIK2 in a BAK1/SERK3 and SERK4 coreceptors-dependent manner, that modulates various physiological and antimicrobial processes including growth prevention and reactive oxygen species (ROS) response regulation.</text>
</comment>
<comment type="subunit">
    <text evidence="1">Interacts with MIK2 (via extracellular leucine-rich repeat domain); this interaction triggers the formation of complex between MIK2 and the BAK1/SERK3 and SERK4 coreceptors, and subsequent BAK1 activation by phosphorylation.</text>
</comment>
<comment type="subcellular location">
    <subcellularLocation>
        <location evidence="1">Cell membrane</location>
    </subcellularLocation>
    <subcellularLocation>
        <location evidence="1">Secreted</location>
        <location evidence="1">Extracellular space</location>
        <location evidence="1">Apoplast</location>
    </subcellularLocation>
    <text evidence="1">The precursor of SCOOP2, PROSCOOP2, accumulates at the plasma membrane and is proteolytically cleaved to release the SCOOP2 in the apoplasm.</text>
</comment>
<comment type="induction">
    <text evidence="5">Accumulates upon infection by generalist herbivores such as Spodoptera littoralis.</text>
</comment>
<comment type="similarity">
    <text evidence="8">Belongs to the serine rich endogenous peptide (SCOOP) phytocytokine family.</text>
</comment>
<proteinExistence type="evidence at transcript level"/>
<keyword id="KW-0052">Apoplast</keyword>
<keyword id="KW-1003">Cell membrane</keyword>
<keyword id="KW-0165">Cleavage on pair of basic residues</keyword>
<keyword id="KW-0472">Membrane</keyword>
<keyword id="KW-1185">Reference proteome</keyword>
<keyword id="KW-0964">Secreted</keyword>
<keyword id="KW-0732">Signal</keyword>